<comment type="function">
    <text evidence="1">Part of the ABC transporter complex MalEFGK involved in maltose/maltodextrin import. Probably responsible for the translocation of the substrate across the membrane.</text>
</comment>
<comment type="subunit">
    <text evidence="1">The complex is composed of two ATP-binding proteins (MalK), two transmembrane proteins (MalG and MalF) and a solute-binding protein (MalE).</text>
</comment>
<comment type="subcellular location">
    <subcellularLocation>
        <location evidence="1">Cell inner membrane</location>
        <topology evidence="1">Multi-pass membrane protein</topology>
    </subcellularLocation>
</comment>
<comment type="similarity">
    <text evidence="4">Belongs to the binding-protein-dependent transport system permease family. MalFG subfamily.</text>
</comment>
<reference key="1">
    <citation type="submission" date="2002-12" db="EMBL/GenBank/DDBJ databases">
        <title>Complete genome sequence of Vibrio vulnificus CMCP6.</title>
        <authorList>
            <person name="Rhee J.H."/>
            <person name="Kim S.Y."/>
            <person name="Chung S.S."/>
            <person name="Kim J.J."/>
            <person name="Moon Y.H."/>
            <person name="Jeong H."/>
            <person name="Choy H.E."/>
        </authorList>
    </citation>
    <scope>NUCLEOTIDE SEQUENCE [LARGE SCALE GENOMIC DNA]</scope>
    <source>
        <strain>CMCP6</strain>
    </source>
</reference>
<accession>Q8D3U7</accession>
<feature type="chain" id="PRO_0000060091" description="Maltose/maltodextrin transport system permease protein MalG">
    <location>
        <begin position="1"/>
        <end position="296"/>
    </location>
</feature>
<feature type="topological domain" description="Cytoplasmic" evidence="2">
    <location>
        <begin position="1"/>
        <end position="12"/>
    </location>
</feature>
<feature type="transmembrane region" description="Helical" evidence="3">
    <location>
        <begin position="13"/>
        <end position="35"/>
    </location>
</feature>
<feature type="topological domain" description="Periplasmic" evidence="2">
    <location>
        <begin position="36"/>
        <end position="88"/>
    </location>
</feature>
<feature type="transmembrane region" description="Helical" evidence="3">
    <location>
        <begin position="89"/>
        <end position="111"/>
    </location>
</feature>
<feature type="topological domain" description="Cytoplasmic" evidence="2">
    <location>
        <begin position="112"/>
        <end position="123"/>
    </location>
</feature>
<feature type="transmembrane region" description="Helical" evidence="3">
    <location>
        <begin position="124"/>
        <end position="143"/>
    </location>
</feature>
<feature type="topological domain" description="Periplasmic" evidence="2">
    <location>
        <begin position="144"/>
        <end position="152"/>
    </location>
</feature>
<feature type="transmembrane region" description="Helical" evidence="3">
    <location>
        <begin position="153"/>
        <end position="175"/>
    </location>
</feature>
<feature type="topological domain" description="Cytoplasmic" evidence="2">
    <location>
        <begin position="176"/>
        <end position="204"/>
    </location>
</feature>
<feature type="transmembrane region" description="Helical" evidence="3">
    <location>
        <begin position="205"/>
        <end position="227"/>
    </location>
</feature>
<feature type="topological domain" description="Periplasmic" evidence="2">
    <location>
        <begin position="228"/>
        <end position="257"/>
    </location>
</feature>
<feature type="transmembrane region" description="Helical" evidence="3">
    <location>
        <begin position="258"/>
        <end position="280"/>
    </location>
</feature>
<feature type="topological domain" description="Cytoplasmic" evidence="2">
    <location>
        <begin position="281"/>
        <end position="296"/>
    </location>
</feature>
<feature type="domain" description="ABC transmembrane type-1" evidence="3">
    <location>
        <begin position="85"/>
        <end position="281"/>
    </location>
</feature>
<gene>
    <name type="primary">malG</name>
    <name type="ordered locus">VV2_1587</name>
</gene>
<protein>
    <recommendedName>
        <fullName evidence="1">Maltose/maltodextrin transport system permease protein MalG</fullName>
    </recommendedName>
</protein>
<sequence length="296" mass="32147">MAMVQGKSLKYRVWATHIALWAFLSMIIFPLLMIVAISFREGNFATGSLIPDNPSLEHWKLALGFSVTNADGSVTPPPFPVLTWLWNSVKVAGITSILIVALSTTSAYAFARLRFKGKETILKAMMIFQMFPAVLALVALYALFDKLGQYIPFLGLNTHGGLIFSYLGGIALHVWTIKGYFETIDNSLEEAAALDGATPWQAFRLVLLPLSVPILAVVFILSFIGVVGEVPVASLLLSDVNSYTLAVGMQQYLYPQNYLWGDFAAAAVLSALPITIVFLLAQRWLVGGLTAGGVKG</sequence>
<keyword id="KW-0997">Cell inner membrane</keyword>
<keyword id="KW-1003">Cell membrane</keyword>
<keyword id="KW-0472">Membrane</keyword>
<keyword id="KW-0762">Sugar transport</keyword>
<keyword id="KW-0812">Transmembrane</keyword>
<keyword id="KW-1133">Transmembrane helix</keyword>
<keyword id="KW-0813">Transport</keyword>
<dbReference type="EMBL" id="AE016796">
    <property type="protein sequence ID" value="AAO08449.1"/>
    <property type="molecule type" value="Genomic_DNA"/>
</dbReference>
<dbReference type="RefSeq" id="WP_011082433.1">
    <property type="nucleotide sequence ID" value="NC_004460.2"/>
</dbReference>
<dbReference type="SMR" id="Q8D3U7"/>
<dbReference type="KEGG" id="vvu:VV2_1587"/>
<dbReference type="HOGENOM" id="CLU_016047_1_2_6"/>
<dbReference type="Proteomes" id="UP000002275">
    <property type="component" value="Chromosome 2"/>
</dbReference>
<dbReference type="GO" id="GO:0005886">
    <property type="term" value="C:plasma membrane"/>
    <property type="evidence" value="ECO:0007669"/>
    <property type="project" value="UniProtKB-SubCell"/>
</dbReference>
<dbReference type="GO" id="GO:0015423">
    <property type="term" value="F:ABC-type maltose transporter activity"/>
    <property type="evidence" value="ECO:0007669"/>
    <property type="project" value="TreeGrafter"/>
</dbReference>
<dbReference type="GO" id="GO:0042956">
    <property type="term" value="P:maltodextrin transmembrane transport"/>
    <property type="evidence" value="ECO:0007669"/>
    <property type="project" value="TreeGrafter"/>
</dbReference>
<dbReference type="CDD" id="cd06261">
    <property type="entry name" value="TM_PBP2"/>
    <property type="match status" value="1"/>
</dbReference>
<dbReference type="FunFam" id="1.10.3720.10:FF:000010">
    <property type="entry name" value="Maltose ABC transporter permease MalG"/>
    <property type="match status" value="1"/>
</dbReference>
<dbReference type="Gene3D" id="1.10.3720.10">
    <property type="entry name" value="MetI-like"/>
    <property type="match status" value="1"/>
</dbReference>
<dbReference type="InterPro" id="IPR050901">
    <property type="entry name" value="BP-dep_ABC_trans_perm"/>
</dbReference>
<dbReference type="InterPro" id="IPR000515">
    <property type="entry name" value="MetI-like"/>
</dbReference>
<dbReference type="InterPro" id="IPR035906">
    <property type="entry name" value="MetI-like_sf"/>
</dbReference>
<dbReference type="NCBIfam" id="NF008231">
    <property type="entry name" value="PRK10998.1"/>
    <property type="match status" value="1"/>
</dbReference>
<dbReference type="PANTHER" id="PTHR32243">
    <property type="entry name" value="MALTOSE TRANSPORT SYSTEM PERMEASE-RELATED"/>
    <property type="match status" value="1"/>
</dbReference>
<dbReference type="PANTHER" id="PTHR32243:SF50">
    <property type="entry name" value="MALTOSE_MALTODEXTRIN TRANSPORT SYSTEM PERMEASE PROTEIN MALG"/>
    <property type="match status" value="1"/>
</dbReference>
<dbReference type="Pfam" id="PF00528">
    <property type="entry name" value="BPD_transp_1"/>
    <property type="match status" value="1"/>
</dbReference>
<dbReference type="SUPFAM" id="SSF161098">
    <property type="entry name" value="MetI-like"/>
    <property type="match status" value="1"/>
</dbReference>
<dbReference type="PROSITE" id="PS50928">
    <property type="entry name" value="ABC_TM1"/>
    <property type="match status" value="1"/>
</dbReference>
<proteinExistence type="inferred from homology"/>
<name>MALG_VIBVU</name>
<evidence type="ECO:0000250" key="1">
    <source>
        <dbReference type="UniProtKB" id="P68183"/>
    </source>
</evidence>
<evidence type="ECO:0000255" key="2"/>
<evidence type="ECO:0000255" key="3">
    <source>
        <dbReference type="PROSITE-ProRule" id="PRU00441"/>
    </source>
</evidence>
<evidence type="ECO:0000305" key="4"/>
<organism>
    <name type="scientific">Vibrio vulnificus (strain CMCP6)</name>
    <dbReference type="NCBI Taxonomy" id="216895"/>
    <lineage>
        <taxon>Bacteria</taxon>
        <taxon>Pseudomonadati</taxon>
        <taxon>Pseudomonadota</taxon>
        <taxon>Gammaproteobacteria</taxon>
        <taxon>Vibrionales</taxon>
        <taxon>Vibrionaceae</taxon>
        <taxon>Vibrio</taxon>
    </lineage>
</organism>